<organism>
    <name type="scientific">Sus scrofa</name>
    <name type="common">Pig</name>
    <dbReference type="NCBI Taxonomy" id="9823"/>
    <lineage>
        <taxon>Eukaryota</taxon>
        <taxon>Metazoa</taxon>
        <taxon>Chordata</taxon>
        <taxon>Craniata</taxon>
        <taxon>Vertebrata</taxon>
        <taxon>Euteleostomi</taxon>
        <taxon>Mammalia</taxon>
        <taxon>Eutheria</taxon>
        <taxon>Laurasiatheria</taxon>
        <taxon>Artiodactyla</taxon>
        <taxon>Suina</taxon>
        <taxon>Suidae</taxon>
        <taxon>Sus</taxon>
    </lineage>
</organism>
<proteinExistence type="evidence at transcript level"/>
<reference key="1">
    <citation type="submission" date="1999-11" db="EMBL/GenBank/DDBJ databases">
        <title>Sus scrofa androgen receptor (AR) coding sequence.</title>
        <authorList>
            <person name="Song J.H."/>
            <person name="Fahrenkrug S.C."/>
            <person name="Rohrer G.A."/>
            <person name="Wise T.H."/>
            <person name="Ford J.J."/>
        </authorList>
    </citation>
    <scope>NUCLEOTIDE SEQUENCE [MRNA]</scope>
    <source>
        <tissue>Pituitary</tissue>
    </source>
</reference>
<reference key="2">
    <citation type="journal article" date="2000" name="Anim. Genet.">
        <title>A highly polymorphic repetitive polypyrimidine/polypurine (CCTTT)n sequence in the 5' untranslated sequence of the porcine androgen receptor gene.</title>
        <authorList>
            <person name="Trakooljul N."/>
            <person name="Ponsuksili S."/>
            <person name="Schellander K."/>
            <person name="Wimmers K."/>
        </authorList>
    </citation>
    <scope>NUCLEOTIDE SEQUENCE [MRNA]</scope>
</reference>
<sequence length="896" mass="97137">MEVQLGLGRVYPRPPSKTFRGAFQNLFQSVREVIQNPGPRHPEAASAAPPGARLQQQQLQQQETSPRRQQQQQQQPSEDGSPQVQSRGPTGYLALDEKQQPSQQQSAPECHPESGCTPEPGAASAASKGLQQQPPAPPDEDDSAAPSTLSLLGPTFPGLSSCSTDLKDILSEAGTMQLLQQQQQQQQQQEAVSEGNSSGRAREATGAPISSKDSYLGGSSTISDSAKELCKAVSVSMGLGVEALEHLSPGEQLRGDCMYAPLLTGPPSVRPTPCAPLAECKGSLLDDGPGKSNEETAEYSPFKAGYTKGLDSESLGCSSGGEAGGSGTLELPSALSLYKSGALDDVAAYPSRDYYNFPLALAGPPPPPPPPHPHARIKLENPLDYGSAWAAAAAQCRYGDLASLHGGGAPGPGSGSPSATSSSSWHTLFTAEESQLYGPCGGGGGGSAGEAGAVAPYGYTRPPQGLAGQEGDLAIPDIWYPGGVVSRVPYPSPSCVKSEMGPWMESYSGPYGDMRLEPTRDHVLPIDYYFPPQKTCLICGDEASGCHYGALTCGSCKVFFKRAAEGKQKYLCASRNDCTIDKFRRKNCPSCRLRKCYEAGMTLGARKLKKLGNLKLQEEGEASSATSPTEEPAQKLTVSHIEGYECQPIFLNVLEAIEPGVVCAGHDNNQPDSFAALLSSLNELGERQLVHVVKWAKALPGFRNLHVDDQMAVIQYSWMGLMVFAMGWRSFTNVNSRMLYFAPDLVFNEYRMHKSRMYSQCVRMRHLSQEFGWLQITPQEFLCMKALLLFSIIPVDGLKNQKFFDELRMNYIKELDRIIACKRKNPTSCSRRFYQLTKLLDSVQPIARELHQFTFDLLIKSHMVSVDFPEMMAEIISVQVPKILSGKVKPIYFHTQ</sequence>
<protein>
    <recommendedName>
        <fullName>Androgen receptor</fullName>
    </recommendedName>
    <alternativeName>
        <fullName>Dihydrotestosterone receptor</fullName>
    </alternativeName>
    <alternativeName>
        <fullName>Nuclear receptor subfamily 3 group C member 4</fullName>
    </alternativeName>
</protein>
<keyword id="KW-0963">Cytoplasm</keyword>
<keyword id="KW-0238">DNA-binding</keyword>
<keyword id="KW-1017">Isopeptide bond</keyword>
<keyword id="KW-0446">Lipid-binding</keyword>
<keyword id="KW-0449">Lipoprotein</keyword>
<keyword id="KW-0479">Metal-binding</keyword>
<keyword id="KW-0539">Nucleus</keyword>
<keyword id="KW-0564">Palmitate</keyword>
<keyword id="KW-0597">Phosphoprotein</keyword>
<keyword id="KW-0675">Receptor</keyword>
<keyword id="KW-1185">Reference proteome</keyword>
<keyword id="KW-0754">Steroid-binding</keyword>
<keyword id="KW-0804">Transcription</keyword>
<keyword id="KW-0805">Transcription regulation</keyword>
<keyword id="KW-0832">Ubl conjugation</keyword>
<keyword id="KW-0862">Zinc</keyword>
<keyword id="KW-0863">Zinc-finger</keyword>
<dbReference type="EMBL" id="AF202775">
    <property type="protein sequence ID" value="AAG37994.1"/>
    <property type="molecule type" value="mRNA"/>
</dbReference>
<dbReference type="EMBL" id="AF161717">
    <property type="protein sequence ID" value="AAG40566.1"/>
    <property type="molecule type" value="mRNA"/>
</dbReference>
<dbReference type="RefSeq" id="NP_999479.2">
    <property type="nucleotide sequence ID" value="NM_214314.2"/>
</dbReference>
<dbReference type="SMR" id="Q9GKL7"/>
<dbReference type="FunCoup" id="Q9GKL7">
    <property type="interactions" value="251"/>
</dbReference>
<dbReference type="STRING" id="9823.ENSSSCP00000013166"/>
<dbReference type="GlyGen" id="Q9GKL7">
    <property type="glycosylation" value="1 site"/>
</dbReference>
<dbReference type="PaxDb" id="9823-ENSSSCP00000013166"/>
<dbReference type="GeneID" id="397582"/>
<dbReference type="KEGG" id="ssc:397582"/>
<dbReference type="CTD" id="367"/>
<dbReference type="eggNOG" id="KOG3575">
    <property type="taxonomic scope" value="Eukaryota"/>
</dbReference>
<dbReference type="InParanoid" id="Q9GKL7"/>
<dbReference type="OrthoDB" id="10032732at2759"/>
<dbReference type="Proteomes" id="UP000008227">
    <property type="component" value="Unplaced"/>
</dbReference>
<dbReference type="Proteomes" id="UP000314985">
    <property type="component" value="Unplaced"/>
</dbReference>
<dbReference type="Proteomes" id="UP000694570">
    <property type="component" value="Unplaced"/>
</dbReference>
<dbReference type="Proteomes" id="UP000694571">
    <property type="component" value="Unplaced"/>
</dbReference>
<dbReference type="Proteomes" id="UP000694720">
    <property type="component" value="Unplaced"/>
</dbReference>
<dbReference type="Proteomes" id="UP000694722">
    <property type="component" value="Unplaced"/>
</dbReference>
<dbReference type="Proteomes" id="UP000694723">
    <property type="component" value="Unplaced"/>
</dbReference>
<dbReference type="Proteomes" id="UP000694724">
    <property type="component" value="Unplaced"/>
</dbReference>
<dbReference type="Proteomes" id="UP000694725">
    <property type="component" value="Unplaced"/>
</dbReference>
<dbReference type="Proteomes" id="UP000694726">
    <property type="component" value="Unplaced"/>
</dbReference>
<dbReference type="Proteomes" id="UP000694727">
    <property type="component" value="Unplaced"/>
</dbReference>
<dbReference type="Proteomes" id="UP000694728">
    <property type="component" value="Unplaced"/>
</dbReference>
<dbReference type="GO" id="GO:0000785">
    <property type="term" value="C:chromatin"/>
    <property type="evidence" value="ECO:0000250"/>
    <property type="project" value="UniProtKB"/>
</dbReference>
<dbReference type="GO" id="GO:0005737">
    <property type="term" value="C:cytoplasm"/>
    <property type="evidence" value="ECO:0000250"/>
    <property type="project" value="UniProtKB"/>
</dbReference>
<dbReference type="GO" id="GO:0005634">
    <property type="term" value="C:nucleus"/>
    <property type="evidence" value="ECO:0000250"/>
    <property type="project" value="UniProtKB"/>
</dbReference>
<dbReference type="GO" id="GO:0005497">
    <property type="term" value="F:androgen binding"/>
    <property type="evidence" value="ECO:0000250"/>
    <property type="project" value="UniProtKB"/>
</dbReference>
<dbReference type="GO" id="GO:0008013">
    <property type="term" value="F:beta-catenin binding"/>
    <property type="evidence" value="ECO:0000250"/>
    <property type="project" value="UniProtKB"/>
</dbReference>
<dbReference type="GO" id="GO:0003700">
    <property type="term" value="F:DNA-binding transcription factor activity"/>
    <property type="evidence" value="ECO:0000250"/>
    <property type="project" value="UniProtKB"/>
</dbReference>
<dbReference type="GO" id="GO:0034056">
    <property type="term" value="F:estrogen response element binding"/>
    <property type="evidence" value="ECO:0000318"/>
    <property type="project" value="GO_Central"/>
</dbReference>
<dbReference type="GO" id="GO:0004879">
    <property type="term" value="F:nuclear receptor activity"/>
    <property type="evidence" value="ECO:0000250"/>
    <property type="project" value="UniProtKB"/>
</dbReference>
<dbReference type="GO" id="GO:0005496">
    <property type="term" value="F:steroid binding"/>
    <property type="evidence" value="ECO:0007669"/>
    <property type="project" value="UniProtKB-KW"/>
</dbReference>
<dbReference type="GO" id="GO:0000976">
    <property type="term" value="F:transcription cis-regulatory region binding"/>
    <property type="evidence" value="ECO:0000250"/>
    <property type="project" value="UniProtKB"/>
</dbReference>
<dbReference type="GO" id="GO:0008270">
    <property type="term" value="F:zinc ion binding"/>
    <property type="evidence" value="ECO:0007669"/>
    <property type="project" value="UniProtKB-KW"/>
</dbReference>
<dbReference type="GO" id="GO:0030521">
    <property type="term" value="P:androgen receptor signaling pathway"/>
    <property type="evidence" value="ECO:0000250"/>
    <property type="project" value="UniProtKB"/>
</dbReference>
<dbReference type="GO" id="GO:0030522">
    <property type="term" value="P:intracellular receptor signaling pathway"/>
    <property type="evidence" value="ECO:0000250"/>
    <property type="project" value="UniProtKB"/>
</dbReference>
<dbReference type="GO" id="GO:0008584">
    <property type="term" value="P:male gonad development"/>
    <property type="evidence" value="ECO:0000318"/>
    <property type="project" value="GO_Central"/>
</dbReference>
<dbReference type="GO" id="GO:2001237">
    <property type="term" value="P:negative regulation of extrinsic apoptotic signaling pathway"/>
    <property type="evidence" value="ECO:0000250"/>
    <property type="project" value="UniProtKB"/>
</dbReference>
<dbReference type="GO" id="GO:0030518">
    <property type="term" value="P:nuclear receptor-mediated steroid hormone signaling pathway"/>
    <property type="evidence" value="ECO:0000318"/>
    <property type="project" value="GO_Central"/>
</dbReference>
<dbReference type="GO" id="GO:0008284">
    <property type="term" value="P:positive regulation of cell population proliferation"/>
    <property type="evidence" value="ECO:0000250"/>
    <property type="project" value="UniProtKB"/>
</dbReference>
<dbReference type="GO" id="GO:0010628">
    <property type="term" value="P:positive regulation of gene expression"/>
    <property type="evidence" value="ECO:0000250"/>
    <property type="project" value="UniProtKB"/>
</dbReference>
<dbReference type="GO" id="GO:0045944">
    <property type="term" value="P:positive regulation of transcription by RNA polymerase II"/>
    <property type="evidence" value="ECO:0000250"/>
    <property type="project" value="UniProtKB"/>
</dbReference>
<dbReference type="GO" id="GO:1903076">
    <property type="term" value="P:regulation of protein localization to plasma membrane"/>
    <property type="evidence" value="ECO:0000250"/>
    <property type="project" value="UniProtKB"/>
</dbReference>
<dbReference type="CDD" id="cd07173">
    <property type="entry name" value="NR_DBD_AR"/>
    <property type="match status" value="1"/>
</dbReference>
<dbReference type="CDD" id="cd07073">
    <property type="entry name" value="NR_LBD_AR"/>
    <property type="match status" value="1"/>
</dbReference>
<dbReference type="FunFam" id="3.30.50.10:FF:000024">
    <property type="entry name" value="Androgen receptor"/>
    <property type="match status" value="1"/>
</dbReference>
<dbReference type="FunFam" id="1.10.565.10:FF:000004">
    <property type="entry name" value="Androgen receptor variant"/>
    <property type="match status" value="1"/>
</dbReference>
<dbReference type="Gene3D" id="3.30.50.10">
    <property type="entry name" value="Erythroid Transcription Factor GATA-1, subunit A"/>
    <property type="match status" value="1"/>
</dbReference>
<dbReference type="Gene3D" id="1.10.565.10">
    <property type="entry name" value="Retinoid X Receptor"/>
    <property type="match status" value="1"/>
</dbReference>
<dbReference type="InterPro" id="IPR001103">
    <property type="entry name" value="Andrgn_rcpt"/>
</dbReference>
<dbReference type="InterPro" id="IPR035500">
    <property type="entry name" value="NHR-like_dom_sf"/>
</dbReference>
<dbReference type="InterPro" id="IPR000536">
    <property type="entry name" value="Nucl_hrmn_rcpt_lig-bd"/>
</dbReference>
<dbReference type="InterPro" id="IPR050200">
    <property type="entry name" value="Nuclear_hormone_rcpt_NR3"/>
</dbReference>
<dbReference type="InterPro" id="IPR001628">
    <property type="entry name" value="Znf_hrmn_rcpt"/>
</dbReference>
<dbReference type="InterPro" id="IPR013088">
    <property type="entry name" value="Znf_NHR/GATA"/>
</dbReference>
<dbReference type="PANTHER" id="PTHR48092">
    <property type="entry name" value="KNIRPS-RELATED PROTEIN-RELATED"/>
    <property type="match status" value="1"/>
</dbReference>
<dbReference type="Pfam" id="PF02166">
    <property type="entry name" value="Androgen_recep"/>
    <property type="match status" value="1"/>
</dbReference>
<dbReference type="Pfam" id="PF00104">
    <property type="entry name" value="Hormone_recep"/>
    <property type="match status" value="1"/>
</dbReference>
<dbReference type="Pfam" id="PF00105">
    <property type="entry name" value="zf-C4"/>
    <property type="match status" value="1"/>
</dbReference>
<dbReference type="PRINTS" id="PR00521">
    <property type="entry name" value="ANDROGENR"/>
</dbReference>
<dbReference type="PRINTS" id="PR00047">
    <property type="entry name" value="STROIDFINGER"/>
</dbReference>
<dbReference type="SMART" id="SM00430">
    <property type="entry name" value="HOLI"/>
    <property type="match status" value="1"/>
</dbReference>
<dbReference type="SMART" id="SM00399">
    <property type="entry name" value="ZnF_C4"/>
    <property type="match status" value="1"/>
</dbReference>
<dbReference type="SUPFAM" id="SSF57716">
    <property type="entry name" value="Glucocorticoid receptor-like (DNA-binding domain)"/>
    <property type="match status" value="1"/>
</dbReference>
<dbReference type="SUPFAM" id="SSF48508">
    <property type="entry name" value="Nuclear receptor ligand-binding domain"/>
    <property type="match status" value="1"/>
</dbReference>
<dbReference type="PROSITE" id="PS51843">
    <property type="entry name" value="NR_LBD"/>
    <property type="match status" value="1"/>
</dbReference>
<dbReference type="PROSITE" id="PS00031">
    <property type="entry name" value="NUCLEAR_REC_DBD_1"/>
    <property type="match status" value="1"/>
</dbReference>
<dbReference type="PROSITE" id="PS51030">
    <property type="entry name" value="NUCLEAR_REC_DBD_2"/>
    <property type="match status" value="1"/>
</dbReference>
<accession>Q9GKL7</accession>
<accession>Q9GKN9</accession>
<feature type="chain" id="PRO_0000053710" description="Androgen receptor">
    <location>
        <begin position="1"/>
        <end position="896"/>
    </location>
</feature>
<feature type="domain" description="NR LBD" evidence="6">
    <location>
        <begin position="645"/>
        <end position="876"/>
    </location>
</feature>
<feature type="DNA-binding region" description="Nuclear receptor" evidence="5">
    <location>
        <begin position="535"/>
        <end position="608"/>
    </location>
</feature>
<feature type="zinc finger region" description="NR C4-type" evidence="5">
    <location>
        <begin position="536"/>
        <end position="556"/>
    </location>
</feature>
<feature type="zinc finger region" description="NR C4-type" evidence="5">
    <location>
        <begin position="572"/>
        <end position="596"/>
    </location>
</feature>
<feature type="region of interest" description="Interaction with ZNF318" evidence="4">
    <location>
        <begin position="1"/>
        <end position="563"/>
    </location>
</feature>
<feature type="region of interest" description="Modulating" evidence="1">
    <location>
        <begin position="1"/>
        <end position="534"/>
    </location>
</feature>
<feature type="region of interest" description="Disordered" evidence="7">
    <location>
        <begin position="35"/>
        <end position="152"/>
    </location>
</feature>
<feature type="region of interest" description="Disordered" evidence="7">
    <location>
        <begin position="178"/>
        <end position="218"/>
    </location>
</feature>
<feature type="region of interest" description="Interaction with LPXN" evidence="2">
    <location>
        <begin position="528"/>
        <end position="895"/>
    </location>
</feature>
<feature type="region of interest" description="Interaction with HIPK3" evidence="3">
    <location>
        <begin position="548"/>
        <end position="638"/>
    </location>
</feature>
<feature type="region of interest" description="Interaction with CCAR1" evidence="2">
    <location>
        <begin position="568"/>
        <end position="895"/>
    </location>
</feature>
<feature type="region of interest" description="Interaction with KAT7" evidence="2">
    <location>
        <begin position="601"/>
        <end position="895"/>
    </location>
</feature>
<feature type="compositionally biased region" description="Low complexity" evidence="7">
    <location>
        <begin position="54"/>
        <end position="78"/>
    </location>
</feature>
<feature type="compositionally biased region" description="Low complexity" evidence="7">
    <location>
        <begin position="178"/>
        <end position="189"/>
    </location>
</feature>
<feature type="compositionally biased region" description="Polar residues" evidence="7">
    <location>
        <begin position="190"/>
        <end position="199"/>
    </location>
</feature>
<feature type="binding site" evidence="2">
    <location>
        <position position="682"/>
    </location>
    <ligand>
        <name>17beta-hydroxy-5alpha-androstan-3-one</name>
        <dbReference type="ChEBI" id="CHEBI:16330"/>
    </ligand>
</feature>
<feature type="binding site" evidence="2">
    <location>
        <position position="729"/>
    </location>
    <ligand>
        <name>17beta-hydroxy-5alpha-androstan-3-one</name>
        <dbReference type="ChEBI" id="CHEBI:16330"/>
    </ligand>
</feature>
<feature type="binding site" evidence="2">
    <location>
        <position position="854"/>
    </location>
    <ligand>
        <name>17beta-hydroxy-5alpha-androstan-3-one</name>
        <dbReference type="ChEBI" id="CHEBI:16330"/>
    </ligand>
</feature>
<feature type="site" description="Interaction with coactivator LXXL and FXXFY motifs" evidence="2">
    <location>
        <position position="697"/>
    </location>
</feature>
<feature type="site" description="Interaction with coactivator FXXLF and FXXFY motifs" evidence="2">
    <location>
        <position position="874"/>
    </location>
</feature>
<feature type="modified residue" description="Phosphoserine; by CDK9" evidence="2">
    <location>
        <position position="65"/>
    </location>
</feature>
<feature type="modified residue" description="Phosphoserine" evidence="2">
    <location>
        <position position="81"/>
    </location>
</feature>
<feature type="modified residue" description="Phosphotyrosine; by CSK" evidence="2">
    <location>
        <position position="215"/>
    </location>
</feature>
<feature type="modified residue" description="Phosphoserine" evidence="2">
    <location>
        <position position="248"/>
    </location>
</feature>
<feature type="modified residue" description="Phosphotyrosine; by CSK and TNK2" evidence="2">
    <location>
        <position position="259"/>
    </location>
</feature>
<feature type="modified residue" description="Phosphotyrosine; by CSK" evidence="2">
    <location>
        <position position="299"/>
    </location>
</feature>
<feature type="modified residue" description="Phosphotyrosine; by CSK" evidence="2">
    <location>
        <position position="338"/>
    </location>
</feature>
<feature type="modified residue" description="Phosphotyrosine; by CSK" evidence="2">
    <location>
        <position position="349"/>
    </location>
</feature>
<feature type="modified residue" description="Phosphotyrosine; by CSK" evidence="2">
    <location>
        <position position="354"/>
    </location>
</feature>
<feature type="modified residue" description="Phosphotyrosine; by CSK and TNK2" evidence="2">
    <location>
        <position position="355"/>
    </location>
</feature>
<feature type="modified residue" description="Phosphotyrosine; by CSK" evidence="2">
    <location>
        <position position="385"/>
    </location>
</feature>
<feature type="modified residue" description="Phosphotyrosine; by CSK" evidence="2">
    <location>
        <position position="511"/>
    </location>
</feature>
<feature type="modified residue" description="Phosphotyrosine; by CSK" evidence="2">
    <location>
        <position position="528"/>
    </location>
</feature>
<feature type="modified residue" description="Phosphoserine; by STK4/MST1" evidence="2">
    <location>
        <position position="627"/>
    </location>
</feature>
<feature type="modified residue" description="Phosphotyrosine; by CSK" evidence="2">
    <location>
        <position position="892"/>
    </location>
</feature>
<feature type="cross-link" description="Glycyl lysine isopeptide (Lys-Gly) (interchain with G-Cter in SUMO)" evidence="1">
    <location>
        <position position="378"/>
    </location>
</feature>
<feature type="cross-link" description="Glycyl lysine isopeptide (Lys-Gly) (interchain with G-Cter in SUMO)" evidence="1">
    <location>
        <position position="497"/>
    </location>
</feature>
<feature type="cross-link" description="Glycyl lysine isopeptide (Lys-Gly) (interchain with G-Cter in ubiquitin)" evidence="2">
    <location>
        <position position="822"/>
    </location>
</feature>
<feature type="cross-link" description="Glycyl lysine isopeptide (Lys-Gly) (interchain with G-Cter in ubiquitin)" evidence="2">
    <location>
        <position position="824"/>
    </location>
</feature>
<feature type="sequence conflict" description="In Ref. 2; AAG40566." evidence="8" ref="2">
    <original>R</original>
    <variation>W</variation>
    <location>
        <position position="13"/>
    </location>
</feature>
<feature type="sequence conflict" description="In Ref. 2; AAG40566." evidence="8" ref="2">
    <location>
        <position position="75"/>
    </location>
</feature>
<feature type="sequence conflict" description="In Ref. 2; AAG40566." evidence="8" ref="2">
    <original>D</original>
    <variation>G</variation>
    <location>
        <position position="256"/>
    </location>
</feature>
<feature type="sequence conflict" description="In Ref. 2; AAG40566." evidence="8" ref="2">
    <original>A</original>
    <variation>E</variation>
    <location>
        <position position="323"/>
    </location>
</feature>
<feature type="sequence conflict" description="In Ref. 1; AAG37994." evidence="8" ref="1">
    <original>R</original>
    <variation>N</variation>
    <location>
        <position position="352"/>
    </location>
</feature>
<feature type="sequence conflict" description="In Ref. 2; AAG40566." evidence="8" ref="2">
    <original>G</original>
    <variation>R</variation>
    <location>
        <position position="363"/>
    </location>
</feature>
<feature type="sequence conflict" description="In Ref. 2; AAG40566." evidence="8" ref="2">
    <original>P</original>
    <variation>S</variation>
    <location>
        <position position="410"/>
    </location>
</feature>
<feature type="sequence conflict" description="In Ref. 2; AAG40566." evidence="8" ref="2">
    <original>ACKR</original>
    <variation>VMQE</variation>
    <location>
        <begin position="820"/>
        <end position="823"/>
    </location>
</feature>
<comment type="function">
    <text evidence="2 3">Steroid hormone receptors are ligand-activated transcription factors that regulate eukaryotic gene expression and affect cellular proliferation and differentiation in target tissues. Transcription factor activity is modulated by bound coactivator and corepressor proteins like ZBTB7A that recruits NCOR1 and NCOR2 to the androgen response elements/ARE on target genes, negatively regulating androgen receptor signaling and androgen-induced cell proliferation. Transcription activation is also down-regulated by NR0B2. Activated, but not phosphorylated, by HIPK3 and ZIPK/DAPK3.</text>
</comment>
<comment type="subunit">
    <text evidence="2 3 4">Binds DNA as a homodimer. Part of a ternary complex containing AR, EFCAB6/DJBP and PARK7. Interacts with HIPK3 and NR0B2 in the presence of androgen. The ligand binding domain interacts with KAT7/HBO1 in the presence of dihydrotestosterone. Interacts with EFCAB6/DJBP, PQBP1, RANBP9, RBAK, SPDEF, SRA1, TGFB1I1 and RREB1. Interacts with ZMIZ1/ZIMP10 and ZMIZ2/ZMIP7 which both enhance its transactivation activity. Interacts with SLC30A9 and RAD54L2/ARIP4. Interacts with MACROD1 (via macro domain) (By similarity). Interacts via the ligand-binding domain with LXXLL and FXXLF motifs from NCOA1, NCOA2, NCOA3 and MAGEA11. Interacts (via nuclear receptor DNA binding domain and nuclear receptor ligand binding domain) with NCOA4 (By similarity). The AR N-terminal poly-Gln region binds Ran resulting in enhancement of AR-mediated transactivation. Ran-binding decreases as the poly-Gln length increases. Interacts with HIP1 (via coiled coil domain). Interacts (via ligand-binding domain) with TRIM68. Interacts with TNK2. Interacts with USP26. Interacts with RNF6. Interacts (regulated by RNF6 probably through polyubiquitination) with RNF14; regulates AR transcriptional activity. Interacts with PRMT2 and TRIM24. Interacts with RACK1. Interacts with RANBP10; this interaction enhances dihydrotestosterone-induced AR transcriptional activity. Interacts with PRPF6 in a hormone-independent way; this interaction enhances dihydrotestosterone-induced AR transcriptional activity. Interacts with STK4/MST1. Interacts with ZIPK/DAPK3. Interacts with LPXN. Interacts with MAK. Part of a complex containing AR, MAK and NCOA3. Interacts with CRY1. Interacts with CCAR1 and GATA2. Interacts with ZNF318. Interacts with BUD31. Interacts with ARID4A. Interacts with ARID4B. Interacts (via NR LBD domain) with ZBTB7A; the interaction is direct and androgen-dependent (By similarity). Interacts with NCOR1 (By similarity). Interacts with NCOR2 (By similarity). Interacts with CRY2 in a ligand-dependent manner (By similarity).</text>
</comment>
<comment type="subcellular location">
    <subcellularLocation>
        <location evidence="2">Nucleus</location>
    </subcellularLocation>
    <subcellularLocation>
        <location evidence="2">Cytoplasm</location>
    </subcellularLocation>
    <text evidence="2">Detected at the promoter of target genes. Predominantly cytoplasmic in unligated form but translocates to the nucleus upon ligand-binding. Can also translocate to the nucleus in unligated form in the presence of RACK1.</text>
</comment>
<comment type="domain">
    <text evidence="1">Composed of three domains: a modulating N-terminal domain, a DNA-binding domain and a C-terminal ligand-binding domain. In the presence of bound steroid the ligand-binding domain interacts with the N-terminal modulating domain, and thereby activates AR transcription factor activity. Agonist binding is required for dimerization and binding to target DNA. The transcription factor activity of the complex formed by ligand-activated AR and DNA is modulated by interactions with coactivator and corepressor proteins. Interaction with RANBP9 is mediated by both the N-terminal domain and the DNA-binding domain. Interaction with EFCAB6/DJBP is mediated by the DNA-binding domain (By similarity).</text>
</comment>
<comment type="PTM">
    <text evidence="2">Phosphorylated in prostate cancer cells in response to several growth factors including EGF. Phosphorylation is induced by c-Src kinase (CSK). Tyr-511 is one of the major phosphorylation sites and an increase in phosphorylation and Src kinase activity is associated with prostate cancer progression (By similarity). Phosphorylation by TNK2 enhances the DNA-binding and transcriptional activity. Phosphorylation at Ser-65 by CDK9 regulates AR promoter selectivity and cell growth (By similarity).</text>
</comment>
<comment type="PTM">
    <text evidence="2">Sumoylated on Lys-378 (major) and Lys-497 (By similarity). Ubiquitinated. Deubiquitinated by USP26 (By similarity). 'Lys-6' and 'Lys-27'-linked polyubiquitination by RNF6 modulates AR transcriptional activity and specificity (By similarity).</text>
</comment>
<comment type="PTM">
    <text evidence="2">Palmitoylated by ZDHHC7 and ZDHHC21. Palmitoylation is required for plasma membrane targeting and for rapid intracellular signaling via ERK and AKT kinases and cAMP generation (By similarity).</text>
</comment>
<comment type="miscellaneous">
    <text>In the absence of ligand, steroid hormone receptors are thought to be weakly associated with nuclear components; hormone binding greatly increases receptor affinity. The hormone-receptor complex appears to recognize discrete DNA sequences upstream of transcriptional start sites.</text>
</comment>
<comment type="miscellaneous">
    <text>Transcriptional activity is enhanced by binding to RANBP9.</text>
</comment>
<comment type="similarity">
    <text evidence="8">Belongs to the nuclear hormone receptor family. NR3 subfamily.</text>
</comment>
<name>ANDR_PIG</name>
<gene>
    <name type="primary">AR</name>
    <name type="synonym">NR3C4</name>
</gene>
<evidence type="ECO:0000250" key="1"/>
<evidence type="ECO:0000250" key="2">
    <source>
        <dbReference type="UniProtKB" id="P10275"/>
    </source>
</evidence>
<evidence type="ECO:0000250" key="3">
    <source>
        <dbReference type="UniProtKB" id="P15207"/>
    </source>
</evidence>
<evidence type="ECO:0000250" key="4">
    <source>
        <dbReference type="UniProtKB" id="P19091"/>
    </source>
</evidence>
<evidence type="ECO:0000255" key="5">
    <source>
        <dbReference type="PROSITE-ProRule" id="PRU00407"/>
    </source>
</evidence>
<evidence type="ECO:0000255" key="6">
    <source>
        <dbReference type="PROSITE-ProRule" id="PRU01189"/>
    </source>
</evidence>
<evidence type="ECO:0000256" key="7">
    <source>
        <dbReference type="SAM" id="MobiDB-lite"/>
    </source>
</evidence>
<evidence type="ECO:0000305" key="8"/>